<proteinExistence type="inferred from homology"/>
<keyword id="KW-0963">Cytoplasm</keyword>
<keyword id="KW-0489">Methyltransferase</keyword>
<keyword id="KW-0698">rRNA processing</keyword>
<keyword id="KW-0949">S-adenosyl-L-methionine</keyword>
<keyword id="KW-0808">Transferase</keyword>
<sequence length="313" mass="34148">MGNELRHRTVLLDEAVESLVTRPDGVCVDGTFGRGGHSRAVLARLASAGRLIAFDKDPRAIETAQGIEDARFSIVHDSFASMRDALAARGVEKVSGVLLDLGVSSPQVDDPARGFSFRADGPLDMRMDPTRGESAAEWLARASVQELTEVIRDYGEERFAFQIAKALVARRAESDRLGPLDTTGELAQIVGHVVKTREKGKDPATRTFQAIRIHVNQELADLQVVLDAALSLLEQGGRLVVISFHSLEDRIVKRFMQAHASAPAVDRRLPIRAVDLPSPPLKIISRQFPSEAEVAANPRARSAVMRIAERVTP</sequence>
<protein>
    <recommendedName>
        <fullName evidence="1">Ribosomal RNA small subunit methyltransferase H</fullName>
        <ecNumber evidence="1">2.1.1.199</ecNumber>
    </recommendedName>
    <alternativeName>
        <fullName evidence="1">16S rRNA m(4)C1402 methyltransferase</fullName>
    </alternativeName>
    <alternativeName>
        <fullName evidence="1">rRNA (cytosine-N(4)-)-methyltransferase RsmH</fullName>
    </alternativeName>
</protein>
<accession>Q1BZH1</accession>
<feature type="chain" id="PRO_0000386768" description="Ribosomal RNA small subunit methyltransferase H">
    <location>
        <begin position="1"/>
        <end position="313"/>
    </location>
</feature>
<feature type="binding site" evidence="1">
    <location>
        <begin position="35"/>
        <end position="37"/>
    </location>
    <ligand>
        <name>S-adenosyl-L-methionine</name>
        <dbReference type="ChEBI" id="CHEBI:59789"/>
    </ligand>
</feature>
<feature type="binding site" evidence="1">
    <location>
        <position position="55"/>
    </location>
    <ligand>
        <name>S-adenosyl-L-methionine</name>
        <dbReference type="ChEBI" id="CHEBI:59789"/>
    </ligand>
</feature>
<feature type="binding site" evidence="1">
    <location>
        <position position="79"/>
    </location>
    <ligand>
        <name>S-adenosyl-L-methionine</name>
        <dbReference type="ChEBI" id="CHEBI:59789"/>
    </ligand>
</feature>
<feature type="binding site" evidence="1">
    <location>
        <position position="100"/>
    </location>
    <ligand>
        <name>S-adenosyl-L-methionine</name>
        <dbReference type="ChEBI" id="CHEBI:59789"/>
    </ligand>
</feature>
<feature type="binding site" evidence="1">
    <location>
        <position position="107"/>
    </location>
    <ligand>
        <name>S-adenosyl-L-methionine</name>
        <dbReference type="ChEBI" id="CHEBI:59789"/>
    </ligand>
</feature>
<evidence type="ECO:0000255" key="1">
    <source>
        <dbReference type="HAMAP-Rule" id="MF_01007"/>
    </source>
</evidence>
<comment type="function">
    <text evidence="1">Specifically methylates the N4 position of cytidine in position 1402 (C1402) of 16S rRNA.</text>
</comment>
<comment type="catalytic activity">
    <reaction evidence="1">
        <text>cytidine(1402) in 16S rRNA + S-adenosyl-L-methionine = N(4)-methylcytidine(1402) in 16S rRNA + S-adenosyl-L-homocysteine + H(+)</text>
        <dbReference type="Rhea" id="RHEA:42928"/>
        <dbReference type="Rhea" id="RHEA-COMP:10286"/>
        <dbReference type="Rhea" id="RHEA-COMP:10287"/>
        <dbReference type="ChEBI" id="CHEBI:15378"/>
        <dbReference type="ChEBI" id="CHEBI:57856"/>
        <dbReference type="ChEBI" id="CHEBI:59789"/>
        <dbReference type="ChEBI" id="CHEBI:74506"/>
        <dbReference type="ChEBI" id="CHEBI:82748"/>
        <dbReference type="EC" id="2.1.1.199"/>
    </reaction>
</comment>
<comment type="subcellular location">
    <subcellularLocation>
        <location evidence="1">Cytoplasm</location>
    </subcellularLocation>
</comment>
<comment type="similarity">
    <text evidence="1">Belongs to the methyltransferase superfamily. RsmH family.</text>
</comment>
<dbReference type="EC" id="2.1.1.199" evidence="1"/>
<dbReference type="EMBL" id="CP000378">
    <property type="protein sequence ID" value="ABF74984.1"/>
    <property type="molecule type" value="Genomic_DNA"/>
</dbReference>
<dbReference type="SMR" id="Q1BZH1"/>
<dbReference type="HOGENOM" id="CLU_038422_2_0_4"/>
<dbReference type="GO" id="GO:0005737">
    <property type="term" value="C:cytoplasm"/>
    <property type="evidence" value="ECO:0007669"/>
    <property type="project" value="UniProtKB-SubCell"/>
</dbReference>
<dbReference type="GO" id="GO:0071424">
    <property type="term" value="F:rRNA (cytosine-N4-)-methyltransferase activity"/>
    <property type="evidence" value="ECO:0007669"/>
    <property type="project" value="UniProtKB-UniRule"/>
</dbReference>
<dbReference type="GO" id="GO:0070475">
    <property type="term" value="P:rRNA base methylation"/>
    <property type="evidence" value="ECO:0007669"/>
    <property type="project" value="UniProtKB-UniRule"/>
</dbReference>
<dbReference type="Gene3D" id="1.10.150.170">
    <property type="entry name" value="Putative methyltransferase TM0872, insert domain"/>
    <property type="match status" value="1"/>
</dbReference>
<dbReference type="Gene3D" id="3.40.50.150">
    <property type="entry name" value="Vaccinia Virus protein VP39"/>
    <property type="match status" value="1"/>
</dbReference>
<dbReference type="HAMAP" id="MF_01007">
    <property type="entry name" value="16SrRNA_methyltr_H"/>
    <property type="match status" value="1"/>
</dbReference>
<dbReference type="InterPro" id="IPR002903">
    <property type="entry name" value="RsmH"/>
</dbReference>
<dbReference type="InterPro" id="IPR023397">
    <property type="entry name" value="SAM-dep_MeTrfase_MraW_recog"/>
</dbReference>
<dbReference type="InterPro" id="IPR029063">
    <property type="entry name" value="SAM-dependent_MTases_sf"/>
</dbReference>
<dbReference type="NCBIfam" id="TIGR00006">
    <property type="entry name" value="16S rRNA (cytosine(1402)-N(4))-methyltransferase RsmH"/>
    <property type="match status" value="1"/>
</dbReference>
<dbReference type="PANTHER" id="PTHR11265:SF0">
    <property type="entry name" value="12S RRNA N4-METHYLCYTIDINE METHYLTRANSFERASE"/>
    <property type="match status" value="1"/>
</dbReference>
<dbReference type="PANTHER" id="PTHR11265">
    <property type="entry name" value="S-ADENOSYL-METHYLTRANSFERASE MRAW"/>
    <property type="match status" value="1"/>
</dbReference>
<dbReference type="Pfam" id="PF01795">
    <property type="entry name" value="Methyltransf_5"/>
    <property type="match status" value="1"/>
</dbReference>
<dbReference type="PIRSF" id="PIRSF004486">
    <property type="entry name" value="MraW"/>
    <property type="match status" value="1"/>
</dbReference>
<dbReference type="SUPFAM" id="SSF81799">
    <property type="entry name" value="Putative methyltransferase TM0872, insert domain"/>
    <property type="match status" value="1"/>
</dbReference>
<dbReference type="SUPFAM" id="SSF53335">
    <property type="entry name" value="S-adenosyl-L-methionine-dependent methyltransferases"/>
    <property type="match status" value="1"/>
</dbReference>
<reference key="1">
    <citation type="submission" date="2006-05" db="EMBL/GenBank/DDBJ databases">
        <title>Complete sequence of chromosome 1 of Burkholderia cenocepacia AU 1054.</title>
        <authorList>
            <consortium name="US DOE Joint Genome Institute"/>
            <person name="Copeland A."/>
            <person name="Lucas S."/>
            <person name="Lapidus A."/>
            <person name="Barry K."/>
            <person name="Detter J.C."/>
            <person name="Glavina del Rio T."/>
            <person name="Hammon N."/>
            <person name="Israni S."/>
            <person name="Dalin E."/>
            <person name="Tice H."/>
            <person name="Pitluck S."/>
            <person name="Chain P."/>
            <person name="Malfatti S."/>
            <person name="Shin M."/>
            <person name="Vergez L."/>
            <person name="Schmutz J."/>
            <person name="Larimer F."/>
            <person name="Land M."/>
            <person name="Hauser L."/>
            <person name="Kyrpides N."/>
            <person name="Lykidis A."/>
            <person name="LiPuma J.J."/>
            <person name="Konstantinidis K."/>
            <person name="Tiedje J.M."/>
            <person name="Richardson P."/>
        </authorList>
    </citation>
    <scope>NUCLEOTIDE SEQUENCE [LARGE SCALE GENOMIC DNA]</scope>
    <source>
        <strain>AU 1054</strain>
    </source>
</reference>
<organism>
    <name type="scientific">Burkholderia orbicola (strain AU 1054)</name>
    <dbReference type="NCBI Taxonomy" id="331271"/>
    <lineage>
        <taxon>Bacteria</taxon>
        <taxon>Pseudomonadati</taxon>
        <taxon>Pseudomonadota</taxon>
        <taxon>Betaproteobacteria</taxon>
        <taxon>Burkholderiales</taxon>
        <taxon>Burkholderiaceae</taxon>
        <taxon>Burkholderia</taxon>
        <taxon>Burkholderia cepacia complex</taxon>
        <taxon>Burkholderia orbicola</taxon>
    </lineage>
</organism>
<name>RSMH_BURO1</name>
<gene>
    <name evidence="1" type="primary">rsmH</name>
    <name type="synonym">mraW</name>
    <name type="ordered locus">Bcen_0069</name>
</gene>